<proteinExistence type="inferred from homology"/>
<name>SYP_STRPZ</name>
<feature type="chain" id="PRO_1000199429" description="Proline--tRNA ligase">
    <location>
        <begin position="1"/>
        <end position="618"/>
    </location>
</feature>
<reference key="1">
    <citation type="journal article" date="2008" name="J. Bacteriol.">
        <title>Genome sequence of a nephritogenic and highly transformable M49 strain of Streptococcus pyogenes.</title>
        <authorList>
            <person name="McShan W.M."/>
            <person name="Ferretti J.J."/>
            <person name="Karasawa T."/>
            <person name="Suvorov A.N."/>
            <person name="Lin S."/>
            <person name="Qin B."/>
            <person name="Jia H."/>
            <person name="Kenton S."/>
            <person name="Najar F."/>
            <person name="Wu H."/>
            <person name="Scott J."/>
            <person name="Roe B.A."/>
            <person name="Savic D.J."/>
        </authorList>
    </citation>
    <scope>NUCLEOTIDE SEQUENCE [LARGE SCALE GENOMIC DNA]</scope>
    <source>
        <strain>NZ131</strain>
    </source>
</reference>
<evidence type="ECO:0000255" key="1">
    <source>
        <dbReference type="HAMAP-Rule" id="MF_01569"/>
    </source>
</evidence>
<organism>
    <name type="scientific">Streptococcus pyogenes serotype M49 (strain NZ131)</name>
    <dbReference type="NCBI Taxonomy" id="471876"/>
    <lineage>
        <taxon>Bacteria</taxon>
        <taxon>Bacillati</taxon>
        <taxon>Bacillota</taxon>
        <taxon>Bacilli</taxon>
        <taxon>Lactobacillales</taxon>
        <taxon>Streptococcaceae</taxon>
        <taxon>Streptococcus</taxon>
    </lineage>
</organism>
<dbReference type="EC" id="6.1.1.15" evidence="1"/>
<dbReference type="EMBL" id="CP000829">
    <property type="protein sequence ID" value="ACI61877.1"/>
    <property type="molecule type" value="Genomic_DNA"/>
</dbReference>
<dbReference type="SMR" id="B5XIL5"/>
<dbReference type="KEGG" id="soz:Spy49_1619c"/>
<dbReference type="HOGENOM" id="CLU_016739_0_0_9"/>
<dbReference type="Proteomes" id="UP000001039">
    <property type="component" value="Chromosome"/>
</dbReference>
<dbReference type="GO" id="GO:0005829">
    <property type="term" value="C:cytosol"/>
    <property type="evidence" value="ECO:0007669"/>
    <property type="project" value="TreeGrafter"/>
</dbReference>
<dbReference type="GO" id="GO:0002161">
    <property type="term" value="F:aminoacyl-tRNA deacylase activity"/>
    <property type="evidence" value="ECO:0007669"/>
    <property type="project" value="InterPro"/>
</dbReference>
<dbReference type="GO" id="GO:0005524">
    <property type="term" value="F:ATP binding"/>
    <property type="evidence" value="ECO:0007669"/>
    <property type="project" value="UniProtKB-UniRule"/>
</dbReference>
<dbReference type="GO" id="GO:0140096">
    <property type="term" value="F:catalytic activity, acting on a protein"/>
    <property type="evidence" value="ECO:0007669"/>
    <property type="project" value="UniProtKB-ARBA"/>
</dbReference>
<dbReference type="GO" id="GO:0004827">
    <property type="term" value="F:proline-tRNA ligase activity"/>
    <property type="evidence" value="ECO:0007669"/>
    <property type="project" value="UniProtKB-UniRule"/>
</dbReference>
<dbReference type="GO" id="GO:0016740">
    <property type="term" value="F:transferase activity"/>
    <property type="evidence" value="ECO:0007669"/>
    <property type="project" value="UniProtKB-ARBA"/>
</dbReference>
<dbReference type="GO" id="GO:0006433">
    <property type="term" value="P:prolyl-tRNA aminoacylation"/>
    <property type="evidence" value="ECO:0007669"/>
    <property type="project" value="UniProtKB-UniRule"/>
</dbReference>
<dbReference type="CDD" id="cd04334">
    <property type="entry name" value="ProRS-INS"/>
    <property type="match status" value="1"/>
</dbReference>
<dbReference type="CDD" id="cd00861">
    <property type="entry name" value="ProRS_anticodon_short"/>
    <property type="match status" value="1"/>
</dbReference>
<dbReference type="FunFam" id="3.40.50.800:FF:000011">
    <property type="entry name" value="Proline--tRNA ligase"/>
    <property type="match status" value="1"/>
</dbReference>
<dbReference type="Gene3D" id="3.40.50.800">
    <property type="entry name" value="Anticodon-binding domain"/>
    <property type="match status" value="1"/>
</dbReference>
<dbReference type="Gene3D" id="3.30.930.10">
    <property type="entry name" value="Bira Bifunctional Protein, Domain 2"/>
    <property type="match status" value="2"/>
</dbReference>
<dbReference type="Gene3D" id="3.90.960.10">
    <property type="entry name" value="YbaK/aminoacyl-tRNA synthetase-associated domain"/>
    <property type="match status" value="1"/>
</dbReference>
<dbReference type="HAMAP" id="MF_01569">
    <property type="entry name" value="Pro_tRNA_synth_type1"/>
    <property type="match status" value="1"/>
</dbReference>
<dbReference type="InterPro" id="IPR002314">
    <property type="entry name" value="aa-tRNA-synt_IIb"/>
</dbReference>
<dbReference type="InterPro" id="IPR006195">
    <property type="entry name" value="aa-tRNA-synth_II"/>
</dbReference>
<dbReference type="InterPro" id="IPR045864">
    <property type="entry name" value="aa-tRNA-synth_II/BPL/LPL"/>
</dbReference>
<dbReference type="InterPro" id="IPR004154">
    <property type="entry name" value="Anticodon-bd"/>
</dbReference>
<dbReference type="InterPro" id="IPR036621">
    <property type="entry name" value="Anticodon-bd_dom_sf"/>
</dbReference>
<dbReference type="InterPro" id="IPR002316">
    <property type="entry name" value="Pro-tRNA-ligase_IIa"/>
</dbReference>
<dbReference type="InterPro" id="IPR004500">
    <property type="entry name" value="Pro-tRNA-synth_IIa_bac-type"/>
</dbReference>
<dbReference type="InterPro" id="IPR023717">
    <property type="entry name" value="Pro-tRNA-Synthase_IIa_type1"/>
</dbReference>
<dbReference type="InterPro" id="IPR050062">
    <property type="entry name" value="Pro-tRNA_synthetase"/>
</dbReference>
<dbReference type="InterPro" id="IPR044140">
    <property type="entry name" value="ProRS_anticodon_short"/>
</dbReference>
<dbReference type="InterPro" id="IPR036754">
    <property type="entry name" value="YbaK/aa-tRNA-synt-asso_dom_sf"/>
</dbReference>
<dbReference type="InterPro" id="IPR007214">
    <property type="entry name" value="YbaK/aa-tRNA-synth-assoc-dom"/>
</dbReference>
<dbReference type="NCBIfam" id="NF006625">
    <property type="entry name" value="PRK09194.1"/>
    <property type="match status" value="1"/>
</dbReference>
<dbReference type="NCBIfam" id="TIGR00409">
    <property type="entry name" value="proS_fam_II"/>
    <property type="match status" value="2"/>
</dbReference>
<dbReference type="PANTHER" id="PTHR42753">
    <property type="entry name" value="MITOCHONDRIAL RIBOSOME PROTEIN L39/PROLYL-TRNA LIGASE FAMILY MEMBER"/>
    <property type="match status" value="1"/>
</dbReference>
<dbReference type="PANTHER" id="PTHR42753:SF2">
    <property type="entry name" value="PROLINE--TRNA LIGASE"/>
    <property type="match status" value="1"/>
</dbReference>
<dbReference type="Pfam" id="PF03129">
    <property type="entry name" value="HGTP_anticodon"/>
    <property type="match status" value="1"/>
</dbReference>
<dbReference type="Pfam" id="PF00587">
    <property type="entry name" value="tRNA-synt_2b"/>
    <property type="match status" value="1"/>
</dbReference>
<dbReference type="Pfam" id="PF04073">
    <property type="entry name" value="tRNA_edit"/>
    <property type="match status" value="1"/>
</dbReference>
<dbReference type="PRINTS" id="PR01046">
    <property type="entry name" value="TRNASYNTHPRO"/>
</dbReference>
<dbReference type="SUPFAM" id="SSF52954">
    <property type="entry name" value="Class II aaRS ABD-related"/>
    <property type="match status" value="1"/>
</dbReference>
<dbReference type="SUPFAM" id="SSF55681">
    <property type="entry name" value="Class II aaRS and biotin synthetases"/>
    <property type="match status" value="1"/>
</dbReference>
<dbReference type="SUPFAM" id="SSF55826">
    <property type="entry name" value="YbaK/ProRS associated domain"/>
    <property type="match status" value="1"/>
</dbReference>
<dbReference type="PROSITE" id="PS50862">
    <property type="entry name" value="AA_TRNA_LIGASE_II"/>
    <property type="match status" value="1"/>
</dbReference>
<protein>
    <recommendedName>
        <fullName evidence="1">Proline--tRNA ligase</fullName>
        <ecNumber evidence="1">6.1.1.15</ecNumber>
    </recommendedName>
    <alternativeName>
        <fullName evidence="1">Prolyl-tRNA synthetase</fullName>
        <shortName evidence="1">ProRS</shortName>
    </alternativeName>
</protein>
<sequence length="618" mass="68685">MKQSKLLIPTLREMPSDAQVISHALMVRAGYVRQVSAGIYAYLPLANRTIEKFKTIMREEFEKIGAVEMLAPALLTADLWRESGRYETYGEDLYKLKNRDNSDFILGPTHEETFTTLVRDAVKSYKQLPLNLYQIQSKYRDEKRPRNGLLRTREFIMKDGYSFHHNYEDLDVTYEDYRQAYEAIFTRAGLDFKGIIGDGGAMGGKDSQEFMAITPARTDLDRWVVLDKSIASMDDIPKEVLEEIKAELAAWMISGEDTIAYSTESSYAANLEMATNEYKPSSKVAAEDALAEVETPHCKTIDEVAAFLSVDETQTIKTLLFVADNEPVVALLVGNDHINTVKLKNYLAADFLEPASEEEARAFFGAGFGSLGPVNLAQGSRIVADRKVQNLTNAVAGANKDGFHVTGVNPGRDFQAEYVDIREVKEGEMSPDGHGVLQFARGIEVGHIFKLGTRYSDSMGATILDENGRTVPIVMGCYGIGVSRILSAVIEQHARLFVNKTPKGDYRYAWGINFPKELAPFDVHLITVNVKDQVAQDLTAKLEADLMAKGYDVLTDDRNERVGSKFSDSDLIGLPIRVTVGKKAAEGIVEIKIKATGDSIEVNAENLIETLEILTKEH</sequence>
<keyword id="KW-0030">Aminoacyl-tRNA synthetase</keyword>
<keyword id="KW-0067">ATP-binding</keyword>
<keyword id="KW-0963">Cytoplasm</keyword>
<keyword id="KW-0436">Ligase</keyword>
<keyword id="KW-0547">Nucleotide-binding</keyword>
<keyword id="KW-0648">Protein biosynthesis</keyword>
<gene>
    <name evidence="1" type="primary">proS</name>
    <name type="ordered locus">Spy49_1619c</name>
</gene>
<comment type="function">
    <text evidence="1">Catalyzes the attachment of proline to tRNA(Pro) in a two-step reaction: proline is first activated by ATP to form Pro-AMP and then transferred to the acceptor end of tRNA(Pro). As ProRS can inadvertently accommodate and process non-cognate amino acids such as alanine and cysteine, to avoid such errors it has two additional distinct editing activities against alanine. One activity is designated as 'pretransfer' editing and involves the tRNA(Pro)-independent hydrolysis of activated Ala-AMP. The other activity is designated 'posttransfer' editing and involves deacylation of mischarged Ala-tRNA(Pro). The misacylated Cys-tRNA(Pro) is not edited by ProRS.</text>
</comment>
<comment type="catalytic activity">
    <reaction evidence="1">
        <text>tRNA(Pro) + L-proline + ATP = L-prolyl-tRNA(Pro) + AMP + diphosphate</text>
        <dbReference type="Rhea" id="RHEA:14305"/>
        <dbReference type="Rhea" id="RHEA-COMP:9700"/>
        <dbReference type="Rhea" id="RHEA-COMP:9702"/>
        <dbReference type="ChEBI" id="CHEBI:30616"/>
        <dbReference type="ChEBI" id="CHEBI:33019"/>
        <dbReference type="ChEBI" id="CHEBI:60039"/>
        <dbReference type="ChEBI" id="CHEBI:78442"/>
        <dbReference type="ChEBI" id="CHEBI:78532"/>
        <dbReference type="ChEBI" id="CHEBI:456215"/>
        <dbReference type="EC" id="6.1.1.15"/>
    </reaction>
</comment>
<comment type="subunit">
    <text evidence="1">Homodimer.</text>
</comment>
<comment type="subcellular location">
    <subcellularLocation>
        <location evidence="1">Cytoplasm</location>
    </subcellularLocation>
</comment>
<comment type="domain">
    <text evidence="1">Consists of three domains: the N-terminal catalytic domain, the editing domain and the C-terminal anticodon-binding domain.</text>
</comment>
<comment type="similarity">
    <text evidence="1">Belongs to the class-II aminoacyl-tRNA synthetase family. ProS type 1 subfamily.</text>
</comment>
<accession>B5XIL5</accession>